<evidence type="ECO:0000250" key="1"/>
<evidence type="ECO:0000250" key="2">
    <source>
        <dbReference type="UniProtKB" id="Q03555"/>
    </source>
</evidence>
<evidence type="ECO:0000250" key="3">
    <source>
        <dbReference type="UniProtKB" id="Q9NQX3"/>
    </source>
</evidence>
<evidence type="ECO:0000256" key="4">
    <source>
        <dbReference type="SAM" id="MobiDB-lite"/>
    </source>
</evidence>
<evidence type="ECO:0000269" key="5">
    <source>
    </source>
</evidence>
<evidence type="ECO:0000269" key="6">
    <source>
    </source>
</evidence>
<evidence type="ECO:0000269" key="7">
    <source>
    </source>
</evidence>
<evidence type="ECO:0000269" key="8">
    <source>
    </source>
</evidence>
<evidence type="ECO:0000305" key="9"/>
<evidence type="ECO:0007744" key="10">
    <source>
    </source>
</evidence>
<evidence type="ECO:0007744" key="11">
    <source>
    </source>
</evidence>
<evidence type="ECO:0007744" key="12">
    <source>
    </source>
</evidence>
<feature type="chain" id="PRO_0000269039" description="Gephyrin">
    <location>
        <begin position="1"/>
        <end position="769"/>
    </location>
</feature>
<feature type="region of interest" description="MPT Mo-transferase">
    <location>
        <begin position="14"/>
        <end position="153"/>
    </location>
</feature>
<feature type="region of interest" description="Interaction with GABARAP" evidence="1">
    <location>
        <begin position="140"/>
        <end position="349"/>
    </location>
</feature>
<feature type="region of interest" description="Disordered" evidence="4">
    <location>
        <begin position="181"/>
        <end position="232"/>
    </location>
</feature>
<feature type="region of interest" description="Disordered" evidence="4">
    <location>
        <begin position="260"/>
        <end position="299"/>
    </location>
</feature>
<feature type="region of interest" description="MPT adenylyltransferase">
    <location>
        <begin position="327"/>
        <end position="769"/>
    </location>
</feature>
<feature type="compositionally biased region" description="Pro residues" evidence="4">
    <location>
        <begin position="187"/>
        <end position="199"/>
    </location>
</feature>
<feature type="compositionally biased region" description="Polar residues" evidence="4">
    <location>
        <begin position="261"/>
        <end position="286"/>
    </location>
</feature>
<feature type="modified residue" description="Phosphoserine" evidence="10 12">
    <location>
        <position position="188"/>
    </location>
</feature>
<feature type="modified residue" description="Phosphoserine" evidence="10 12">
    <location>
        <position position="194"/>
    </location>
</feature>
<feature type="modified residue" description="Phosphothreonine" evidence="3">
    <location>
        <position position="198"/>
    </location>
</feature>
<feature type="modified residue" description="Phosphoserine" evidence="12">
    <location>
        <position position="200"/>
    </location>
</feature>
<feature type="modified residue" description="Phosphoserine" evidence="12">
    <location>
        <position position="262"/>
    </location>
</feature>
<feature type="modified residue" description="Phosphothreonine" evidence="12">
    <location>
        <position position="265"/>
    </location>
</feature>
<feature type="modified residue" description="Phosphothreonine" evidence="12">
    <location>
        <position position="266"/>
    </location>
</feature>
<feature type="modified residue" description="Phosphoserine" evidence="12">
    <location>
        <position position="268"/>
    </location>
</feature>
<feature type="modified residue" description="Phosphoserine" evidence="12">
    <location>
        <position position="270"/>
    </location>
</feature>
<feature type="modified residue" description="Phosphoserine" evidence="11 12">
    <location>
        <position position="338"/>
    </location>
</feature>
<feature type="lipid moiety-binding region" description="S-palmitoyl cysteine" evidence="3">
    <location>
        <position position="212"/>
    </location>
</feature>
<feature type="lipid moiety-binding region" description="S-palmitoyl cysteine" evidence="3">
    <location>
        <position position="284"/>
    </location>
</feature>
<feature type="sequence conflict" description="In Ref. 1; BAC38476." evidence="9" ref="1">
    <original>S</original>
    <variation>T</variation>
    <location>
        <position position="262"/>
    </location>
</feature>
<feature type="sequence conflict" description="In Ref. 1; BAC38476." evidence="9" ref="1">
    <original>T</original>
    <variation>S</variation>
    <location>
        <position position="463"/>
    </location>
</feature>
<protein>
    <recommendedName>
        <fullName>Gephyrin</fullName>
    </recommendedName>
    <domain>
        <recommendedName>
            <fullName>Molybdopterin adenylyltransferase</fullName>
            <shortName>MPT adenylyltransferase</shortName>
            <ecNumber evidence="3">2.7.7.75</ecNumber>
        </recommendedName>
        <alternativeName>
            <fullName>Domain G</fullName>
        </alternativeName>
    </domain>
    <domain>
        <recommendedName>
            <fullName>Molybdopterin molybdenumtransferase</fullName>
            <shortName>MPT Mo-transferase</shortName>
            <ecNumber evidence="3">2.10.1.1</ecNumber>
        </recommendedName>
        <alternativeName>
            <fullName>Domain E</fullName>
        </alternativeName>
    </domain>
</protein>
<sequence length="769" mass="83282">MATEGMILTNHDHQIRVGVLTVSDSCFRNLAEDRSGINLKDLVQDPSLLGGTISAYKIVPDEIEEIKETLIDWCDEKELNLILTTGGTGFAPRDVTPEATKEVIEREAPGMALAMLMGSLNVTPLGMLSRPVCGIRGKTLIINLPGSKKGSQECFQFILPALPHAIDLLRDAIVKVKEVHDELEDLPSPPPPLSPPPTTSPHKQTEDKGVQCEEEEEEKKDSGVASTEDSSSSHITAAALAAKIPDSIISRGVQVLPRDTASLSTTPSESPRAQATSRLSTASCPTPKQIRRPDESKGVASRVGSLKARLPSCSSTYSVSEVQSRCSSKENILRASHSAVDITKVARRHRMSPFPLTSMDKAFITVLEMTPVLGTEIINYRDGMGRVLAQDVYAKDNLPPFPASVKDGYAVRAADGPGDRFIIGESQAGEQPTQTVMPGQVMRVTTGAPIPCGADAVVQVEDTELIRESDDGTEELEVRILVQARPGQDIRPIGHDIKRGECVLAKGTHMGPSEIGLLATVGVTEVEVNKFPVVAVMSTGNELLNPEDDLLPGKIRDSNRSTLLATIQEHGYPTINLGIVGDNPDDLLNALNEGISRADVIITSGGVSMGEKDYLKQVLDIDLHAQIHFGRVFMKPGLPTTFATLDIDGVRKIIFALPGNPVSAVVTCNLFVVPALRKMQGILDPRPTIIKARLSCDVKLDPRPEYHRCILTWHHQEPLPWAQSTGNQMSSRLMSMRSANGLLMLPPKTEQYVELHKGEVVDVMVIGRL</sequence>
<dbReference type="EC" id="2.7.7.75" evidence="3"/>
<dbReference type="EC" id="2.10.1.1" evidence="3"/>
<dbReference type="EMBL" id="AK082353">
    <property type="protein sequence ID" value="BAC38476.1"/>
    <property type="molecule type" value="mRNA"/>
</dbReference>
<dbReference type="EMBL" id="AC124346">
    <property type="status" value="NOT_ANNOTATED_CDS"/>
    <property type="molecule type" value="Genomic_DNA"/>
</dbReference>
<dbReference type="EMBL" id="AC124572">
    <property type="status" value="NOT_ANNOTATED_CDS"/>
    <property type="molecule type" value="Genomic_DNA"/>
</dbReference>
<dbReference type="EMBL" id="AC125057">
    <property type="status" value="NOT_ANNOTATED_CDS"/>
    <property type="molecule type" value="Genomic_DNA"/>
</dbReference>
<dbReference type="EMBL" id="AC132097">
    <property type="status" value="NOT_ANNOTATED_CDS"/>
    <property type="molecule type" value="Genomic_DNA"/>
</dbReference>
<dbReference type="EMBL" id="AC148324">
    <property type="status" value="NOT_ANNOTATED_CDS"/>
    <property type="molecule type" value="Genomic_DNA"/>
</dbReference>
<dbReference type="CCDS" id="CCDS26000.1"/>
<dbReference type="RefSeq" id="NP_766540.2">
    <property type="nucleotide sequence ID" value="NM_172952.3"/>
</dbReference>
<dbReference type="SMR" id="Q8BUV3"/>
<dbReference type="BioGRID" id="234521">
    <property type="interactions" value="70"/>
</dbReference>
<dbReference type="CORUM" id="Q8BUV3"/>
<dbReference type="ELM" id="Q8BUV3"/>
<dbReference type="FunCoup" id="Q8BUV3">
    <property type="interactions" value="1280"/>
</dbReference>
<dbReference type="IntAct" id="Q8BUV3">
    <property type="interactions" value="8"/>
</dbReference>
<dbReference type="MINT" id="Q8BUV3"/>
<dbReference type="STRING" id="10090.ENSMUSP00000106018"/>
<dbReference type="GlyGen" id="Q8BUV3">
    <property type="glycosylation" value="4 sites, 1 O-linked glycan (4 sites)"/>
</dbReference>
<dbReference type="iPTMnet" id="Q8BUV3"/>
<dbReference type="PhosphoSitePlus" id="Q8BUV3"/>
<dbReference type="SwissPalm" id="Q8BUV3"/>
<dbReference type="jPOST" id="Q8BUV3"/>
<dbReference type="PaxDb" id="10090-ENSMUSP00000106018"/>
<dbReference type="PeptideAtlas" id="Q8BUV3"/>
<dbReference type="ProteomicsDB" id="266793"/>
<dbReference type="Pumba" id="Q8BUV3"/>
<dbReference type="ABCD" id="Q8BUV3">
    <property type="antibodies" value="3 sequenced antibodies"/>
</dbReference>
<dbReference type="Antibodypedia" id="144">
    <property type="antibodies" value="460 antibodies from 40 providers"/>
</dbReference>
<dbReference type="DNASU" id="268566"/>
<dbReference type="Ensembl" id="ENSMUST00000052472.6">
    <property type="protein sequence ID" value="ENSMUSP00000054064.5"/>
    <property type="gene ID" value="ENSMUSG00000047454.13"/>
</dbReference>
<dbReference type="GeneID" id="268566"/>
<dbReference type="KEGG" id="mmu:268566"/>
<dbReference type="UCSC" id="uc007nzc.2">
    <property type="organism name" value="mouse"/>
</dbReference>
<dbReference type="AGR" id="MGI:109602"/>
<dbReference type="CTD" id="10243"/>
<dbReference type="MGI" id="MGI:109602">
    <property type="gene designation" value="Gphn"/>
</dbReference>
<dbReference type="VEuPathDB" id="HostDB:ENSMUSG00000047454"/>
<dbReference type="eggNOG" id="KOG2371">
    <property type="taxonomic scope" value="Eukaryota"/>
</dbReference>
<dbReference type="GeneTree" id="ENSGT00390000016577"/>
<dbReference type="HOGENOM" id="CLU_010186_2_2_1"/>
<dbReference type="InParanoid" id="Q8BUV3"/>
<dbReference type="OrthoDB" id="4349954at2759"/>
<dbReference type="Reactome" id="R-MMU-947581">
    <property type="pathway name" value="Molybdenum cofactor biosynthesis"/>
</dbReference>
<dbReference type="UniPathway" id="UPA00344"/>
<dbReference type="BioGRID-ORCS" id="268566">
    <property type="hits" value="1 hit in 79 CRISPR screens"/>
</dbReference>
<dbReference type="CD-CODE" id="CE726F99">
    <property type="entry name" value="Postsynaptic density"/>
</dbReference>
<dbReference type="ChiTaRS" id="Gphn">
    <property type="organism name" value="mouse"/>
</dbReference>
<dbReference type="PRO" id="PR:Q8BUV3"/>
<dbReference type="Proteomes" id="UP000000589">
    <property type="component" value="Chromosome 12"/>
</dbReference>
<dbReference type="RNAct" id="Q8BUV3">
    <property type="molecule type" value="protein"/>
</dbReference>
<dbReference type="Bgee" id="ENSMUSG00000047454">
    <property type="expression patterns" value="Expressed in spermatid and 265 other cell types or tissues"/>
</dbReference>
<dbReference type="ExpressionAtlas" id="Q8BUV3">
    <property type="expression patterns" value="baseline and differential"/>
</dbReference>
<dbReference type="GO" id="GO:0005856">
    <property type="term" value="C:cytoskeleton"/>
    <property type="evidence" value="ECO:0007669"/>
    <property type="project" value="UniProtKB-SubCell"/>
</dbReference>
<dbReference type="GO" id="GO:0005829">
    <property type="term" value="C:cytosol"/>
    <property type="evidence" value="ECO:0000314"/>
    <property type="project" value="UniProtKB"/>
</dbReference>
<dbReference type="GO" id="GO:0030425">
    <property type="term" value="C:dendrite"/>
    <property type="evidence" value="ECO:0000314"/>
    <property type="project" value="MGI"/>
</dbReference>
<dbReference type="GO" id="GO:0019897">
    <property type="term" value="C:extrinsic component of plasma membrane"/>
    <property type="evidence" value="ECO:0000304"/>
    <property type="project" value="MGI"/>
</dbReference>
<dbReference type="GO" id="GO:0098982">
    <property type="term" value="C:GABA-ergic synapse"/>
    <property type="evidence" value="ECO:0000314"/>
    <property type="project" value="MGI"/>
</dbReference>
<dbReference type="GO" id="GO:0060077">
    <property type="term" value="C:inhibitory synapse"/>
    <property type="evidence" value="ECO:0000314"/>
    <property type="project" value="MGI"/>
</dbReference>
<dbReference type="GO" id="GO:0043025">
    <property type="term" value="C:neuronal cell body"/>
    <property type="evidence" value="ECO:0000314"/>
    <property type="project" value="MGI"/>
</dbReference>
<dbReference type="GO" id="GO:0098794">
    <property type="term" value="C:postsynapse"/>
    <property type="evidence" value="ECO:0000314"/>
    <property type="project" value="MGI"/>
</dbReference>
<dbReference type="GO" id="GO:0014069">
    <property type="term" value="C:postsynaptic density"/>
    <property type="evidence" value="ECO:0000314"/>
    <property type="project" value="UniProtKB"/>
</dbReference>
<dbReference type="GO" id="GO:0045211">
    <property type="term" value="C:postsynaptic membrane"/>
    <property type="evidence" value="ECO:0000250"/>
    <property type="project" value="UniProtKB"/>
</dbReference>
<dbReference type="GO" id="GO:0099091">
    <property type="term" value="C:postsynaptic specialization, intracellular component"/>
    <property type="evidence" value="ECO:0000314"/>
    <property type="project" value="SynGO"/>
</dbReference>
<dbReference type="GO" id="GO:0097060">
    <property type="term" value="C:synaptic membrane"/>
    <property type="evidence" value="ECO:0000314"/>
    <property type="project" value="UniProtKB"/>
</dbReference>
<dbReference type="GO" id="GO:0005524">
    <property type="term" value="F:ATP binding"/>
    <property type="evidence" value="ECO:0007669"/>
    <property type="project" value="UniProtKB-KW"/>
</dbReference>
<dbReference type="GO" id="GO:0008092">
    <property type="term" value="F:cytoskeletal protein binding"/>
    <property type="evidence" value="ECO:0000304"/>
    <property type="project" value="MGI"/>
</dbReference>
<dbReference type="GO" id="GO:0042802">
    <property type="term" value="F:identical protein binding"/>
    <property type="evidence" value="ECO:0000250"/>
    <property type="project" value="UniProtKB"/>
</dbReference>
<dbReference type="GO" id="GO:0046872">
    <property type="term" value="F:metal ion binding"/>
    <property type="evidence" value="ECO:0007669"/>
    <property type="project" value="UniProtKB-KW"/>
</dbReference>
<dbReference type="GO" id="GO:0061598">
    <property type="term" value="F:molybdopterin adenylyltransferase activity"/>
    <property type="evidence" value="ECO:0000266"/>
    <property type="project" value="MGI"/>
</dbReference>
<dbReference type="GO" id="GO:0061599">
    <property type="term" value="F:molybdopterin molybdotransferase activity"/>
    <property type="evidence" value="ECO:0000315"/>
    <property type="project" value="MGI"/>
</dbReference>
<dbReference type="GO" id="GO:0007529">
    <property type="term" value="P:establishment of synaptic specificity at neuromuscular junction"/>
    <property type="evidence" value="ECO:0000315"/>
    <property type="project" value="MGI"/>
</dbReference>
<dbReference type="GO" id="GO:0097112">
    <property type="term" value="P:gamma-aminobutyric acid receptor clustering"/>
    <property type="evidence" value="ECO:0000316"/>
    <property type="project" value="MGI"/>
</dbReference>
<dbReference type="GO" id="GO:0072579">
    <property type="term" value="P:glycine receptor clustering"/>
    <property type="evidence" value="ECO:0000315"/>
    <property type="project" value="MGI"/>
</dbReference>
<dbReference type="GO" id="GO:0006777">
    <property type="term" value="P:Mo-molybdopterin cofactor biosynthetic process"/>
    <property type="evidence" value="ECO:0000315"/>
    <property type="project" value="MGI"/>
</dbReference>
<dbReference type="GO" id="GO:0032324">
    <property type="term" value="P:molybdopterin cofactor biosynthetic process"/>
    <property type="evidence" value="ECO:0000315"/>
    <property type="project" value="MGI"/>
</dbReference>
<dbReference type="GO" id="GO:0099645">
    <property type="term" value="P:neurotransmitter receptor localization to postsynaptic specialization membrane"/>
    <property type="evidence" value="ECO:0000314"/>
    <property type="project" value="SynGO"/>
</dbReference>
<dbReference type="CDD" id="cd00887">
    <property type="entry name" value="MoeA"/>
    <property type="match status" value="1"/>
</dbReference>
<dbReference type="CDD" id="cd00886">
    <property type="entry name" value="MogA_MoaB"/>
    <property type="match status" value="1"/>
</dbReference>
<dbReference type="FunFam" id="2.170.190.11:FF:000001">
    <property type="entry name" value="Molybdopterin molybdenumtransferase"/>
    <property type="match status" value="1"/>
</dbReference>
<dbReference type="FunFam" id="2.40.340.10:FF:000001">
    <property type="entry name" value="Molybdopterin molybdenumtransferase"/>
    <property type="match status" value="1"/>
</dbReference>
<dbReference type="FunFam" id="3.40.980.10:FF:000001">
    <property type="entry name" value="Molybdopterin molybdenumtransferase"/>
    <property type="match status" value="1"/>
</dbReference>
<dbReference type="FunFam" id="3.40.980.10:FF:000002">
    <property type="entry name" value="Molybdopterin molybdenumtransferase"/>
    <property type="match status" value="1"/>
</dbReference>
<dbReference type="FunFam" id="3.90.105.10:FF:000004">
    <property type="entry name" value="Molybdopterin molybdenumtransferase"/>
    <property type="match status" value="1"/>
</dbReference>
<dbReference type="Gene3D" id="3.40.980.10">
    <property type="entry name" value="MoaB/Mog-like domain"/>
    <property type="match status" value="2"/>
</dbReference>
<dbReference type="Gene3D" id="2.40.340.10">
    <property type="entry name" value="MoeA, C-terminal, domain IV"/>
    <property type="match status" value="1"/>
</dbReference>
<dbReference type="Gene3D" id="3.90.105.10">
    <property type="entry name" value="Molybdopterin biosynthesis moea protein, domain 2"/>
    <property type="match status" value="1"/>
</dbReference>
<dbReference type="Gene3D" id="2.170.190.11">
    <property type="entry name" value="Molybdopterin biosynthesis moea protein, domain 3"/>
    <property type="match status" value="1"/>
</dbReference>
<dbReference type="InterPro" id="IPR036425">
    <property type="entry name" value="MoaB/Mog-like_dom_sf"/>
</dbReference>
<dbReference type="InterPro" id="IPR001453">
    <property type="entry name" value="MoaB/Mog_dom"/>
</dbReference>
<dbReference type="InterPro" id="IPR008284">
    <property type="entry name" value="MoCF_biosynth_CS"/>
</dbReference>
<dbReference type="InterPro" id="IPR038987">
    <property type="entry name" value="MoeA-like"/>
</dbReference>
<dbReference type="InterPro" id="IPR005111">
    <property type="entry name" value="MoeA_C_domain_IV"/>
</dbReference>
<dbReference type="InterPro" id="IPR036688">
    <property type="entry name" value="MoeA_C_domain_IV_sf"/>
</dbReference>
<dbReference type="InterPro" id="IPR005110">
    <property type="entry name" value="MoeA_linker/N"/>
</dbReference>
<dbReference type="InterPro" id="IPR036135">
    <property type="entry name" value="MoeA_linker/N_sf"/>
</dbReference>
<dbReference type="NCBIfam" id="NF045515">
    <property type="entry name" value="Glp_gephyrin"/>
    <property type="match status" value="1"/>
</dbReference>
<dbReference type="NCBIfam" id="TIGR00177">
    <property type="entry name" value="molyb_syn"/>
    <property type="match status" value="2"/>
</dbReference>
<dbReference type="PANTHER" id="PTHR10192:SF5">
    <property type="entry name" value="GEPHYRIN"/>
    <property type="match status" value="1"/>
</dbReference>
<dbReference type="PANTHER" id="PTHR10192">
    <property type="entry name" value="MOLYBDOPTERIN BIOSYNTHESIS PROTEIN"/>
    <property type="match status" value="1"/>
</dbReference>
<dbReference type="Pfam" id="PF00994">
    <property type="entry name" value="MoCF_biosynth"/>
    <property type="match status" value="2"/>
</dbReference>
<dbReference type="Pfam" id="PF03454">
    <property type="entry name" value="MoeA_C"/>
    <property type="match status" value="1"/>
</dbReference>
<dbReference type="Pfam" id="PF03453">
    <property type="entry name" value="MoeA_N"/>
    <property type="match status" value="1"/>
</dbReference>
<dbReference type="SMART" id="SM00852">
    <property type="entry name" value="MoCF_biosynth"/>
    <property type="match status" value="2"/>
</dbReference>
<dbReference type="SUPFAM" id="SSF63867">
    <property type="entry name" value="MoeA C-terminal domain-like"/>
    <property type="match status" value="1"/>
</dbReference>
<dbReference type="SUPFAM" id="SSF63882">
    <property type="entry name" value="MoeA N-terminal region -like"/>
    <property type="match status" value="1"/>
</dbReference>
<dbReference type="SUPFAM" id="SSF53218">
    <property type="entry name" value="Molybdenum cofactor biosynthesis proteins"/>
    <property type="match status" value="2"/>
</dbReference>
<dbReference type="PROSITE" id="PS01078">
    <property type="entry name" value="MOCF_BIOSYNTHESIS_1"/>
    <property type="match status" value="1"/>
</dbReference>
<dbReference type="PROSITE" id="PS01079">
    <property type="entry name" value="MOCF_BIOSYNTHESIS_2"/>
    <property type="match status" value="1"/>
</dbReference>
<gene>
    <name type="primary">Gphn</name>
</gene>
<name>GEPH_MOUSE</name>
<organism>
    <name type="scientific">Mus musculus</name>
    <name type="common">Mouse</name>
    <dbReference type="NCBI Taxonomy" id="10090"/>
    <lineage>
        <taxon>Eukaryota</taxon>
        <taxon>Metazoa</taxon>
        <taxon>Chordata</taxon>
        <taxon>Craniata</taxon>
        <taxon>Vertebrata</taxon>
        <taxon>Euteleostomi</taxon>
        <taxon>Mammalia</taxon>
        <taxon>Eutheria</taxon>
        <taxon>Euarchontoglires</taxon>
        <taxon>Glires</taxon>
        <taxon>Rodentia</taxon>
        <taxon>Myomorpha</taxon>
        <taxon>Muroidea</taxon>
        <taxon>Muridae</taxon>
        <taxon>Murinae</taxon>
        <taxon>Mus</taxon>
        <taxon>Mus</taxon>
    </lineage>
</organism>
<reference key="1">
    <citation type="journal article" date="2005" name="Science">
        <title>The transcriptional landscape of the mammalian genome.</title>
        <authorList>
            <person name="Carninci P."/>
            <person name="Kasukawa T."/>
            <person name="Katayama S."/>
            <person name="Gough J."/>
            <person name="Frith M.C."/>
            <person name="Maeda N."/>
            <person name="Oyama R."/>
            <person name="Ravasi T."/>
            <person name="Lenhard B."/>
            <person name="Wells C."/>
            <person name="Kodzius R."/>
            <person name="Shimokawa K."/>
            <person name="Bajic V.B."/>
            <person name="Brenner S.E."/>
            <person name="Batalov S."/>
            <person name="Forrest A.R."/>
            <person name="Zavolan M."/>
            <person name="Davis M.J."/>
            <person name="Wilming L.G."/>
            <person name="Aidinis V."/>
            <person name="Allen J.E."/>
            <person name="Ambesi-Impiombato A."/>
            <person name="Apweiler R."/>
            <person name="Aturaliya R.N."/>
            <person name="Bailey T.L."/>
            <person name="Bansal M."/>
            <person name="Baxter L."/>
            <person name="Beisel K.W."/>
            <person name="Bersano T."/>
            <person name="Bono H."/>
            <person name="Chalk A.M."/>
            <person name="Chiu K.P."/>
            <person name="Choudhary V."/>
            <person name="Christoffels A."/>
            <person name="Clutterbuck D.R."/>
            <person name="Crowe M.L."/>
            <person name="Dalla E."/>
            <person name="Dalrymple B.P."/>
            <person name="de Bono B."/>
            <person name="Della Gatta G."/>
            <person name="di Bernardo D."/>
            <person name="Down T."/>
            <person name="Engstrom P."/>
            <person name="Fagiolini M."/>
            <person name="Faulkner G."/>
            <person name="Fletcher C.F."/>
            <person name="Fukushima T."/>
            <person name="Furuno M."/>
            <person name="Futaki S."/>
            <person name="Gariboldi M."/>
            <person name="Georgii-Hemming P."/>
            <person name="Gingeras T.R."/>
            <person name="Gojobori T."/>
            <person name="Green R.E."/>
            <person name="Gustincich S."/>
            <person name="Harbers M."/>
            <person name="Hayashi Y."/>
            <person name="Hensch T.K."/>
            <person name="Hirokawa N."/>
            <person name="Hill D."/>
            <person name="Huminiecki L."/>
            <person name="Iacono M."/>
            <person name="Ikeo K."/>
            <person name="Iwama A."/>
            <person name="Ishikawa T."/>
            <person name="Jakt M."/>
            <person name="Kanapin A."/>
            <person name="Katoh M."/>
            <person name="Kawasawa Y."/>
            <person name="Kelso J."/>
            <person name="Kitamura H."/>
            <person name="Kitano H."/>
            <person name="Kollias G."/>
            <person name="Krishnan S.P."/>
            <person name="Kruger A."/>
            <person name="Kummerfeld S.K."/>
            <person name="Kurochkin I.V."/>
            <person name="Lareau L.F."/>
            <person name="Lazarevic D."/>
            <person name="Lipovich L."/>
            <person name="Liu J."/>
            <person name="Liuni S."/>
            <person name="McWilliam S."/>
            <person name="Madan Babu M."/>
            <person name="Madera M."/>
            <person name="Marchionni L."/>
            <person name="Matsuda H."/>
            <person name="Matsuzawa S."/>
            <person name="Miki H."/>
            <person name="Mignone F."/>
            <person name="Miyake S."/>
            <person name="Morris K."/>
            <person name="Mottagui-Tabar S."/>
            <person name="Mulder N."/>
            <person name="Nakano N."/>
            <person name="Nakauchi H."/>
            <person name="Ng P."/>
            <person name="Nilsson R."/>
            <person name="Nishiguchi S."/>
            <person name="Nishikawa S."/>
            <person name="Nori F."/>
            <person name="Ohara O."/>
            <person name="Okazaki Y."/>
            <person name="Orlando V."/>
            <person name="Pang K.C."/>
            <person name="Pavan W.J."/>
            <person name="Pavesi G."/>
            <person name="Pesole G."/>
            <person name="Petrovsky N."/>
            <person name="Piazza S."/>
            <person name="Reed J."/>
            <person name="Reid J.F."/>
            <person name="Ring B.Z."/>
            <person name="Ringwald M."/>
            <person name="Rost B."/>
            <person name="Ruan Y."/>
            <person name="Salzberg S.L."/>
            <person name="Sandelin A."/>
            <person name="Schneider C."/>
            <person name="Schoenbach C."/>
            <person name="Sekiguchi K."/>
            <person name="Semple C.A."/>
            <person name="Seno S."/>
            <person name="Sessa L."/>
            <person name="Sheng Y."/>
            <person name="Shibata Y."/>
            <person name="Shimada H."/>
            <person name="Shimada K."/>
            <person name="Silva D."/>
            <person name="Sinclair B."/>
            <person name="Sperling S."/>
            <person name="Stupka E."/>
            <person name="Sugiura K."/>
            <person name="Sultana R."/>
            <person name="Takenaka Y."/>
            <person name="Taki K."/>
            <person name="Tammoja K."/>
            <person name="Tan S.L."/>
            <person name="Tang S."/>
            <person name="Taylor M.S."/>
            <person name="Tegner J."/>
            <person name="Teichmann S.A."/>
            <person name="Ueda H.R."/>
            <person name="van Nimwegen E."/>
            <person name="Verardo R."/>
            <person name="Wei C.L."/>
            <person name="Yagi K."/>
            <person name="Yamanishi H."/>
            <person name="Zabarovsky E."/>
            <person name="Zhu S."/>
            <person name="Zimmer A."/>
            <person name="Hide W."/>
            <person name="Bult C."/>
            <person name="Grimmond S.M."/>
            <person name="Teasdale R.D."/>
            <person name="Liu E.T."/>
            <person name="Brusic V."/>
            <person name="Quackenbush J."/>
            <person name="Wahlestedt C."/>
            <person name="Mattick J.S."/>
            <person name="Hume D.A."/>
            <person name="Kai C."/>
            <person name="Sasaki D."/>
            <person name="Tomaru Y."/>
            <person name="Fukuda S."/>
            <person name="Kanamori-Katayama M."/>
            <person name="Suzuki M."/>
            <person name="Aoki J."/>
            <person name="Arakawa T."/>
            <person name="Iida J."/>
            <person name="Imamura K."/>
            <person name="Itoh M."/>
            <person name="Kato T."/>
            <person name="Kawaji H."/>
            <person name="Kawagashira N."/>
            <person name="Kawashima T."/>
            <person name="Kojima M."/>
            <person name="Kondo S."/>
            <person name="Konno H."/>
            <person name="Nakano K."/>
            <person name="Ninomiya N."/>
            <person name="Nishio T."/>
            <person name="Okada M."/>
            <person name="Plessy C."/>
            <person name="Shibata K."/>
            <person name="Shiraki T."/>
            <person name="Suzuki S."/>
            <person name="Tagami M."/>
            <person name="Waki K."/>
            <person name="Watahiki A."/>
            <person name="Okamura-Oho Y."/>
            <person name="Suzuki H."/>
            <person name="Kawai J."/>
            <person name="Hayashizaki Y."/>
        </authorList>
    </citation>
    <scope>NUCLEOTIDE SEQUENCE [LARGE SCALE MRNA]</scope>
    <source>
        <strain>C57BL/6J</strain>
        <tissue>Cerebellum</tissue>
    </source>
</reference>
<reference key="2">
    <citation type="journal article" date="2009" name="PLoS Biol.">
        <title>Lineage-specific biology revealed by a finished genome assembly of the mouse.</title>
        <authorList>
            <person name="Church D.M."/>
            <person name="Goodstadt L."/>
            <person name="Hillier L.W."/>
            <person name="Zody M.C."/>
            <person name="Goldstein S."/>
            <person name="She X."/>
            <person name="Bult C.J."/>
            <person name="Agarwala R."/>
            <person name="Cherry J.L."/>
            <person name="DiCuccio M."/>
            <person name="Hlavina W."/>
            <person name="Kapustin Y."/>
            <person name="Meric P."/>
            <person name="Maglott D."/>
            <person name="Birtle Z."/>
            <person name="Marques A.C."/>
            <person name="Graves T."/>
            <person name="Zhou S."/>
            <person name="Teague B."/>
            <person name="Potamousis K."/>
            <person name="Churas C."/>
            <person name="Place M."/>
            <person name="Herschleb J."/>
            <person name="Runnheim R."/>
            <person name="Forrest D."/>
            <person name="Amos-Landgraf J."/>
            <person name="Schwartz D.C."/>
            <person name="Cheng Z."/>
            <person name="Lindblad-Toh K."/>
            <person name="Eichler E.E."/>
            <person name="Ponting C.P."/>
        </authorList>
    </citation>
    <scope>NUCLEOTIDE SEQUENCE [LARGE SCALE GENOMIC DNA]</scope>
    <source>
        <strain>C57BL/6J</strain>
    </source>
</reference>
<reference key="3">
    <citation type="journal article" date="2006" name="Mol. Cell. Proteomics">
        <title>Comprehensive identification of phosphorylation sites in postsynaptic density preparations.</title>
        <authorList>
            <person name="Trinidad J.C."/>
            <person name="Specht C.G."/>
            <person name="Thalhammer A."/>
            <person name="Schoepfer R."/>
            <person name="Burlingame A.L."/>
        </authorList>
    </citation>
    <scope>IDENTIFICATION BY MASS SPECTROMETRY [LARGE SCALE ANALYSIS]</scope>
    <source>
        <tissue>Brain</tissue>
    </source>
</reference>
<reference key="4">
    <citation type="journal article" date="2007" name="Proc. Natl. Acad. Sci. U.S.A.">
        <title>Large-scale phosphorylation analysis of mouse liver.</title>
        <authorList>
            <person name="Villen J."/>
            <person name="Beausoleil S.A."/>
            <person name="Gerber S.A."/>
            <person name="Gygi S.P."/>
        </authorList>
    </citation>
    <scope>PHOSPHORYLATION [LARGE SCALE ANALYSIS] AT SER-188 AND SER-194</scope>
    <scope>IDENTIFICATION BY MASS SPECTROMETRY [LARGE SCALE ANALYSIS]</scope>
    <source>
        <tissue>Liver</tissue>
    </source>
</reference>
<reference key="5">
    <citation type="journal article" date="2008" name="J. Proteome Res.">
        <title>Specific phosphopeptide enrichment with immobilized titanium ion affinity chromatography adsorbent for phosphoproteome analysis.</title>
        <authorList>
            <person name="Zhou H."/>
            <person name="Ye M."/>
            <person name="Dong J."/>
            <person name="Han G."/>
            <person name="Jiang X."/>
            <person name="Wu R."/>
            <person name="Zou H."/>
        </authorList>
    </citation>
    <scope>PHOSPHORYLATION [LARGE SCALE ANALYSIS] AT SER-338</scope>
    <scope>IDENTIFICATION BY MASS SPECTROMETRY [LARGE SCALE ANALYSIS]</scope>
    <source>
        <tissue>Liver</tissue>
    </source>
</reference>
<reference key="6">
    <citation type="journal article" date="2010" name="Cell">
        <title>A tissue-specific atlas of mouse protein phosphorylation and expression.</title>
        <authorList>
            <person name="Huttlin E.L."/>
            <person name="Jedrychowski M.P."/>
            <person name="Elias J.E."/>
            <person name="Goswami T."/>
            <person name="Rad R."/>
            <person name="Beausoleil S.A."/>
            <person name="Villen J."/>
            <person name="Haas W."/>
            <person name="Sowa M.E."/>
            <person name="Gygi S.P."/>
        </authorList>
    </citation>
    <scope>PHOSPHORYLATION [LARGE SCALE ANALYSIS] AT SER-188; SER-194; SER-200; SER-262; THR-265; THR-266; SER-268; SER-270 AND SER-338</scope>
    <scope>IDENTIFICATION BY MASS SPECTROMETRY [LARGE SCALE ANALYSIS]</scope>
    <source>
        <tissue>Brain</tissue>
        <tissue>Brown adipose tissue</tissue>
        <tissue>Heart</tissue>
        <tissue>Kidney</tissue>
        <tissue>Liver</tissue>
        <tissue>Lung</tissue>
        <tissue>Pancreas</tissue>
        <tissue>Spleen</tissue>
        <tissue>Testis</tissue>
    </source>
</reference>
<reference key="7">
    <citation type="journal article" date="2011" name="Sci. Signal.">
        <title>SH3 domain-based phototrapping in living cells reveals Rho family GAP signaling complexes.</title>
        <authorList>
            <person name="Okada H."/>
            <person name="Uezu A."/>
            <person name="Mason F.M."/>
            <person name="Soderblom E.J."/>
            <person name="Moseley M.A. III"/>
            <person name="Soderling S.H."/>
        </authorList>
    </citation>
    <scope>INTERACTION WITH SRGAP2</scope>
</reference>
<reference key="8">
    <citation type="journal article" date="2014" name="PLoS Biol.">
        <title>Palmitoylation of gephyrin controls receptor clustering and plasticity of GABAergic synapses.</title>
        <authorList>
            <person name="Dejanovic B."/>
            <person name="Semtner M."/>
            <person name="Ebert S."/>
            <person name="Lamkemeyer T."/>
            <person name="Neuser F."/>
            <person name="Luescher B."/>
            <person name="Meier J.C."/>
            <person name="Schwarz G."/>
        </authorList>
    </citation>
    <scope>FUNCTION</scope>
    <scope>SUBUNIT</scope>
    <scope>SUBCELLULAR LOCATION</scope>
    <scope>TOPOLOGY</scope>
    <scope>PALMITOYLATION</scope>
</reference>
<reference key="9">
    <citation type="journal article" date="2016" name="Neuron">
        <title>SRGAP2 and its human-specific paralog co-regulate the development of excitatory and inhibitory synapses.</title>
        <authorList>
            <person name="Fossati M."/>
            <person name="Pizzarelli R."/>
            <person name="Schmidt E.R."/>
            <person name="Kupferman J.V."/>
            <person name="Stroebel D."/>
            <person name="Polleux F."/>
            <person name="Charrier C."/>
        </authorList>
    </citation>
    <scope>INTERACTION WITH SRGAP2</scope>
</reference>
<reference key="10">
    <citation type="journal article" date="2016" name="Science">
        <title>Identification of an elaborate complex mediating postsynaptic inhibition.</title>
        <authorList>
            <person name="Uezu A."/>
            <person name="Kanak D.J."/>
            <person name="Bradshaw T.W."/>
            <person name="Soderblom E.J."/>
            <person name="Catavero C.M."/>
            <person name="Burette A.C."/>
            <person name="Weinberg R.J."/>
            <person name="Soderling S.H."/>
        </authorList>
    </citation>
    <scope>SUBCELLULAR LOCATION</scope>
    <scope>INTERACTION WITH ARHGAP32; IQSEC3; INSYN1 AND INSYN2A</scope>
</reference>
<accession>Q8BUV3</accession>
<accession>E9QKJ1</accession>
<keyword id="KW-0067">ATP-binding</keyword>
<keyword id="KW-1003">Cell membrane</keyword>
<keyword id="KW-0966">Cell projection</keyword>
<keyword id="KW-0963">Cytoplasm</keyword>
<keyword id="KW-0206">Cytoskeleton</keyword>
<keyword id="KW-0449">Lipoprotein</keyword>
<keyword id="KW-0460">Magnesium</keyword>
<keyword id="KW-0472">Membrane</keyword>
<keyword id="KW-0479">Metal-binding</keyword>
<keyword id="KW-0500">Molybdenum</keyword>
<keyword id="KW-0501">Molybdenum cofactor biosynthesis</keyword>
<keyword id="KW-0511">Multifunctional enzyme</keyword>
<keyword id="KW-0547">Nucleotide-binding</keyword>
<keyword id="KW-0564">Palmitate</keyword>
<keyword id="KW-0597">Phosphoprotein</keyword>
<keyword id="KW-0628">Postsynaptic cell membrane</keyword>
<keyword id="KW-1185">Reference proteome</keyword>
<keyword id="KW-0770">Synapse</keyword>
<keyword id="KW-0808">Transferase</keyword>
<comment type="function">
    <text evidence="2 6">Microtubule-associated protein involved in membrane protein-cytoskeleton interactions. It is thought to anchor the inhibitory glycine receptor (GLYR) to subsynaptic microtubules (By similarity). Acts as a major instructive molecule at inhibitory synapses, where it also clusters GABA type A receptors (PubMed:25025157).</text>
</comment>
<comment type="function">
    <text evidence="2">Also has a catalytic activity and catalyzes two steps in the biosynthesis of the molybdenum cofactor. In the first step, molybdopterin is adenylated. Subsequently, molybdate is inserted into adenylated molybdopterin and AMP is released.</text>
</comment>
<comment type="catalytic activity">
    <reaction evidence="3">
        <text>molybdopterin + ATP + H(+) = adenylyl-molybdopterin + diphosphate</text>
        <dbReference type="Rhea" id="RHEA:31331"/>
        <dbReference type="ChEBI" id="CHEBI:15378"/>
        <dbReference type="ChEBI" id="CHEBI:30616"/>
        <dbReference type="ChEBI" id="CHEBI:33019"/>
        <dbReference type="ChEBI" id="CHEBI:58698"/>
        <dbReference type="ChEBI" id="CHEBI:62727"/>
        <dbReference type="EC" id="2.7.7.75"/>
    </reaction>
    <physiologicalReaction direction="left-to-right" evidence="3">
        <dbReference type="Rhea" id="RHEA:31332"/>
    </physiologicalReaction>
</comment>
<comment type="catalytic activity">
    <reaction evidence="3">
        <text>adenylyl-molybdopterin + molybdate = Mo-molybdopterin + AMP + H(+)</text>
        <dbReference type="Rhea" id="RHEA:35047"/>
        <dbReference type="ChEBI" id="CHEBI:15378"/>
        <dbReference type="ChEBI" id="CHEBI:36264"/>
        <dbReference type="ChEBI" id="CHEBI:62727"/>
        <dbReference type="ChEBI" id="CHEBI:71302"/>
        <dbReference type="ChEBI" id="CHEBI:456215"/>
        <dbReference type="EC" id="2.10.1.1"/>
    </reaction>
    <physiologicalReaction direction="left-to-right" evidence="3">
        <dbReference type="Rhea" id="RHEA:35048"/>
    </physiologicalReaction>
</comment>
<comment type="cofactor">
    <cofactor evidence="1">
        <name>Mg(2+)</name>
        <dbReference type="ChEBI" id="CHEBI:18420"/>
    </cofactor>
</comment>
<comment type="activity regulation">
    <text evidence="1">Inhibited by copper and tungsten.</text>
</comment>
<comment type="pathway">
    <text evidence="3">Cofactor biosynthesis; molybdopterin biosynthesis.</text>
</comment>
<comment type="subunit">
    <text evidence="2 3 5 6 7 8">Homotrimer, homodimer and homooligomer (PubMed:25025157). Interacts with SRGAP2 (via SH3 domain) (PubMed:22126966, PubMed:27373832). Interacts with GLRB (By similarity). Interacts with GABARAP (By similarity). Interacts with GABRA3 (By similarity). GABRA3 and GLRB occupy overlapping binding sites (By similarity). Interacts with ARHGAP32; IQSEC3, INSYN1 and INSYN2A (PubMed:27609886).</text>
</comment>
<comment type="interaction">
    <interactant intactId="EBI-771218">
        <id>Q8BUV3</id>
    </interactant>
    <interactant intactId="EBI-7069198">
        <id>P48168</id>
        <label>Glrb</label>
    </interactant>
    <organismsDiffer>false</organismsDiffer>
    <experiments>4</experiments>
</comment>
<comment type="interaction">
    <interactant intactId="EBI-771218">
        <id>Q8BUV3</id>
    </interactant>
    <interactant intactId="EBI-2432975">
        <id>Q9QUR7</id>
        <label>Pin1</label>
    </interactant>
    <organismsDiffer>false</organismsDiffer>
    <experiments>6</experiments>
</comment>
<comment type="subcellular location">
    <subcellularLocation>
        <location evidence="2">Postsynaptic cell membrane</location>
        <topology evidence="2">Lipid-anchor</topology>
        <orientation evidence="2">Cytoplasmic side</orientation>
    </subcellularLocation>
    <subcellularLocation>
        <location evidence="2">Cell membrane</location>
        <topology evidence="2">Lipid-anchor</topology>
        <orientation evidence="2">Cytoplasmic side</orientation>
    </subcellularLocation>
    <subcellularLocation>
        <location evidence="6">Cytoplasm</location>
        <location evidence="6">Cytosol</location>
    </subcellularLocation>
    <subcellularLocation>
        <location evidence="2">Cytoplasm</location>
        <location evidence="2">Cytoskeleton</location>
    </subcellularLocation>
    <subcellularLocation>
        <location evidence="3">Cell projection</location>
        <location evidence="3">Dendrite</location>
    </subcellularLocation>
    <subcellularLocation>
        <location evidence="8">Postsynaptic density</location>
    </subcellularLocation>
    <text evidence="2 6">Cytoplasmic face of glycinergic postsynaptic membranes (By similarity). Forms clusters at synapses (PubMed:25025157).</text>
</comment>
<comment type="PTM">
    <text evidence="6">Palmitoylated (PubMed:25025157). Palmitoylation is stimulated by GABA type A receptors activity (PubMed:25025157). Palmitoylation by ZDHHC12 regulates clustering at synapses (PubMed:25025157).</text>
</comment>
<comment type="similarity">
    <text evidence="9">In the N-terminal section; belongs to the MoaB/Mog family.</text>
</comment>
<comment type="similarity">
    <text evidence="9">In the C-terminal section; belongs to the MoeA family.</text>
</comment>
<proteinExistence type="evidence at protein level"/>